<sequence length="545" mass="59175">MAEVKCSSSTGSPTTNGLVANAELEVKKLQELVRKLEKQNEQLRNRASAVSNCTPSPHLLLQHPPSVVHQSGTCILSSPVLTRPAGLCLPSPVPTLLCTSAVAGSLFSPESMGCFSTNKRLHLSCINAAEGPQNDCPVPGSTLLDEVQVLDLEDGYCSGDEDTWLYVSPTKDQRTFDSSVSPLQWCRQVLDHPSPEIEAAKRSLCFRLEQGYTVKTSHLSPQSSVDSELSTSELEDDSISMGYKLQDLTDVQIMARLQEESLRQDFATTSTCSSVSRPRSSFSLYSGKKLSCSSDQDSDRYSVEEDDEDFDHLPPPQPRLSRCSPLQRGLSHSQTFSSIRDCRKSPSSQFLNGYQQYNYSSQPQTTEQSQSRTNADKLRRSMPNLARMPSTNNNPVVSMTTVRNSQSFDSNLHGAANGVSRMQSSIPSPGQLQQRVHSVGHFPVSVRPPLKATAYVSPTVQGGSGIPSSTSLQSLSSSGIPMPNKTTSAATIGRSALPRPALSTANGSSIPRSKIAQPQRSFLQPPKTLASLSTLRDGNWRDGCY</sequence>
<organism>
    <name type="scientific">Xenopus tropicalis</name>
    <name type="common">Western clawed frog</name>
    <name type="synonym">Silurana tropicalis</name>
    <dbReference type="NCBI Taxonomy" id="8364"/>
    <lineage>
        <taxon>Eukaryota</taxon>
        <taxon>Metazoa</taxon>
        <taxon>Chordata</taxon>
        <taxon>Craniata</taxon>
        <taxon>Vertebrata</taxon>
        <taxon>Euteleostomi</taxon>
        <taxon>Amphibia</taxon>
        <taxon>Batrachia</taxon>
        <taxon>Anura</taxon>
        <taxon>Pipoidea</taxon>
        <taxon>Pipidae</taxon>
        <taxon>Xenopodinae</taxon>
        <taxon>Xenopus</taxon>
        <taxon>Silurana</taxon>
    </lineage>
</organism>
<feature type="chain" id="PRO_0000316964" description="SLAIN motif-containing protein 1">
    <location>
        <begin position="1"/>
        <end position="545"/>
    </location>
</feature>
<feature type="region of interest" description="Disordered" evidence="3">
    <location>
        <begin position="268"/>
        <end position="342"/>
    </location>
</feature>
<feature type="region of interest" description="Disordered" evidence="3">
    <location>
        <begin position="461"/>
        <end position="526"/>
    </location>
</feature>
<feature type="coiled-coil region" evidence="2">
    <location>
        <begin position="14"/>
        <end position="53"/>
    </location>
</feature>
<feature type="compositionally biased region" description="Low complexity" evidence="3">
    <location>
        <begin position="268"/>
        <end position="286"/>
    </location>
</feature>
<feature type="compositionally biased region" description="Low complexity" evidence="3">
    <location>
        <begin position="466"/>
        <end position="481"/>
    </location>
</feature>
<feature type="compositionally biased region" description="Polar residues" evidence="3">
    <location>
        <begin position="503"/>
        <end position="522"/>
    </location>
</feature>
<accession>A8E4V2</accession>
<dbReference type="EMBL" id="BC153339">
    <property type="protein sequence ID" value="AAI53340.1"/>
    <property type="status" value="ALT_INIT"/>
    <property type="molecule type" value="mRNA"/>
</dbReference>
<dbReference type="RefSeq" id="NP_001106409.2">
    <property type="nucleotide sequence ID" value="NM_001112938.1"/>
</dbReference>
<dbReference type="SMR" id="A8E4V2"/>
<dbReference type="FunCoup" id="A8E4V2">
    <property type="interactions" value="271"/>
</dbReference>
<dbReference type="PaxDb" id="8364-ENSXETP00000033732"/>
<dbReference type="DNASU" id="100127571"/>
<dbReference type="GeneID" id="100127571"/>
<dbReference type="KEGG" id="xtr:100127571"/>
<dbReference type="AGR" id="Xenbase:XB-GENE-5793178"/>
<dbReference type="CTD" id="122060"/>
<dbReference type="Xenbase" id="XB-GENE-5793178">
    <property type="gene designation" value="slain1"/>
</dbReference>
<dbReference type="eggNOG" id="ENOG502QVWF">
    <property type="taxonomic scope" value="Eukaryota"/>
</dbReference>
<dbReference type="InParanoid" id="A8E4V2"/>
<dbReference type="OrthoDB" id="8819875at2759"/>
<dbReference type="Proteomes" id="UP000008143">
    <property type="component" value="Chromosome 2"/>
</dbReference>
<dbReference type="Bgee" id="ENSXETG00000015457">
    <property type="expression patterns" value="Expressed in brain and 2 other cell types or tissues"/>
</dbReference>
<dbReference type="GO" id="GO:0005737">
    <property type="term" value="C:cytoplasm"/>
    <property type="evidence" value="ECO:0007669"/>
    <property type="project" value="UniProtKB-KW"/>
</dbReference>
<dbReference type="GO" id="GO:0005856">
    <property type="term" value="C:cytoskeleton"/>
    <property type="evidence" value="ECO:0007669"/>
    <property type="project" value="UniProtKB-SubCell"/>
</dbReference>
<dbReference type="InterPro" id="IPR026179">
    <property type="entry name" value="Slain"/>
</dbReference>
<dbReference type="PANTHER" id="PTHR22406">
    <property type="entry name" value="NASCENT POLYPEPTIDE-ASSOCIATED COMPLEX SUBUNIT ALPHA, MUSCLE-SPECIFIC FORM"/>
    <property type="match status" value="1"/>
</dbReference>
<dbReference type="PANTHER" id="PTHR22406:SF2">
    <property type="entry name" value="SLAIN MOTIF-CONTAINING PROTEIN 1"/>
    <property type="match status" value="1"/>
</dbReference>
<dbReference type="Pfam" id="PF15301">
    <property type="entry name" value="SLAIN"/>
    <property type="match status" value="2"/>
</dbReference>
<keyword id="KW-0175">Coiled coil</keyword>
<keyword id="KW-0963">Cytoplasm</keyword>
<keyword id="KW-0206">Cytoskeleton</keyword>
<keyword id="KW-1185">Reference proteome</keyword>
<gene>
    <name type="primary">slain1</name>
</gene>
<reference key="1">
    <citation type="submission" date="2007-09" db="EMBL/GenBank/DDBJ databases">
        <authorList>
            <consortium name="NIH - Xenopus Gene Collection (XGC) project"/>
        </authorList>
    </citation>
    <scope>NUCLEOTIDE SEQUENCE [LARGE SCALE MRNA]</scope>
    <source>
        <tissue>Brain</tissue>
    </source>
</reference>
<evidence type="ECO:0000250" key="1">
    <source>
        <dbReference type="UniProtKB" id="Q68FF7"/>
    </source>
</evidence>
<evidence type="ECO:0000255" key="2"/>
<evidence type="ECO:0000256" key="3">
    <source>
        <dbReference type="SAM" id="MobiDB-lite"/>
    </source>
</evidence>
<evidence type="ECO:0000305" key="4"/>
<name>SLAI1_XENTR</name>
<comment type="function">
    <text evidence="1">Microtubule plus-end tracking protein that might be involved in the regulation of cytoplasmic microtubule dynamics, microtubule organization and microtubule elongation.</text>
</comment>
<comment type="subcellular location">
    <subcellularLocation>
        <location evidence="1">Cytoplasm</location>
        <location evidence="1">Cytoskeleton</location>
    </subcellularLocation>
    <text evidence="1">Colocalizes with microtubules. Detected at the plus end of growing microtubules.</text>
</comment>
<comment type="similarity">
    <text evidence="4">Belongs to the SLAIN motif-containing family.</text>
</comment>
<comment type="sequence caution" evidence="4">
    <conflict type="erroneous initiation">
        <sequence resource="EMBL-CDS" id="AAI53340"/>
    </conflict>
</comment>
<protein>
    <recommendedName>
        <fullName>SLAIN motif-containing protein 1</fullName>
    </recommendedName>
</protein>
<proteinExistence type="evidence at transcript level"/>